<keyword id="KW-0244">Early protein</keyword>
<keyword id="KW-0325">Glycoprotein</keyword>
<dbReference type="EMBL" id="M15952">
    <property type="protein sequence ID" value="AAA42482.1"/>
    <property type="molecule type" value="Genomic_DNA"/>
</dbReference>
<dbReference type="PIR" id="C29500">
    <property type="entry name" value="ERAD32"/>
</dbReference>
<dbReference type="InterPro" id="IPR009266">
    <property type="entry name" value="Adeno_E3"/>
</dbReference>
<dbReference type="Pfam" id="PF06040">
    <property type="entry name" value="Adeno_E3"/>
    <property type="match status" value="1"/>
</dbReference>
<name>E316_ADE03</name>
<evidence type="ECO:0000255" key="1"/>
<proteinExistence type="predicted"/>
<reference key="1">
    <citation type="journal article" date="1986" name="Gene">
        <title>Region E3 of human adenoviruses; differences between the oncogenic adenovirus-3 and the non-oncogenic adenovirus-2.</title>
        <authorList>
            <person name="Signaes C."/>
            <person name="Akusjaervi G."/>
            <person name="Pettersson U."/>
        </authorList>
    </citation>
    <scope>NUCLEOTIDE SEQUENCE [GENOMIC DNA]</scope>
</reference>
<protein>
    <recommendedName>
        <fullName>Early E3 16 kDa glycoprotein</fullName>
    </recommendedName>
</protein>
<sequence length="146" mass="16047">MKAFAVLFVLSLIKTELRPSYGLPLLQSGLYNTNQIFQKTQTLPPFIQDSNSTLPAPSTTNLPETNKLASHLQHRLSRSLLSANTTTPKTGGELRGLPTDDPWVVAGFVTLGVVAGGLVLILCYLYTPCCAYLVILCCWFKKWGPY</sequence>
<organism>
    <name type="scientific">Human adenovirus B serotype 3</name>
    <name type="common">HAdV-3</name>
    <name type="synonym">Human adenovirus 3</name>
    <dbReference type="NCBI Taxonomy" id="45659"/>
    <lineage>
        <taxon>Viruses</taxon>
        <taxon>Varidnaviria</taxon>
        <taxon>Bamfordvirae</taxon>
        <taxon>Preplasmiviricota</taxon>
        <taxon>Tectiliviricetes</taxon>
        <taxon>Rowavirales</taxon>
        <taxon>Adenoviridae</taxon>
        <taxon>Mastadenovirus</taxon>
        <taxon>Human mastadenovirus B</taxon>
    </lineage>
</organism>
<comment type="function">
    <text>E3 proteins seem to be dispensable for virus growth in tissue culture cells. They are potentially important for virus growth under special conditions; E3 region may help adenoviruses to evade the immune surveillance of the host.</text>
</comment>
<feature type="chain" id="PRO_0000221751" description="Early E3 16 kDa glycoprotein">
    <location>
        <begin position="1"/>
        <end position="146"/>
    </location>
</feature>
<feature type="glycosylation site" description="N-linked (GlcNAc...) asparagine; by host" evidence="1">
    <location>
        <position position="51"/>
    </location>
</feature>
<feature type="glycosylation site" description="N-linked (GlcNAc...) asparagine; by host" evidence="1">
    <location>
        <position position="84"/>
    </location>
</feature>
<organismHost>
    <name type="scientific">Homo sapiens</name>
    <name type="common">Human</name>
    <dbReference type="NCBI Taxonomy" id="9606"/>
</organismHost>
<accession>P11320</accession>